<accession>B2SL50</accession>
<comment type="similarity">
    <text evidence="1">Belongs to the Smg family.</text>
</comment>
<reference key="1">
    <citation type="journal article" date="2008" name="BMC Genomics">
        <title>Genome sequence and rapid evolution of the rice pathogen Xanthomonas oryzae pv. oryzae PXO99A.</title>
        <authorList>
            <person name="Salzberg S.L."/>
            <person name="Sommer D.D."/>
            <person name="Schatz M.C."/>
            <person name="Phillippy A.M."/>
            <person name="Rabinowicz P.D."/>
            <person name="Tsuge S."/>
            <person name="Furutani A."/>
            <person name="Ochiai H."/>
            <person name="Delcher A.L."/>
            <person name="Kelley D."/>
            <person name="Madupu R."/>
            <person name="Puiu D."/>
            <person name="Radune D."/>
            <person name="Shumway M."/>
            <person name="Trapnell C."/>
            <person name="Aparna G."/>
            <person name="Jha G."/>
            <person name="Pandey A."/>
            <person name="Patil P.B."/>
            <person name="Ishihara H."/>
            <person name="Meyer D.F."/>
            <person name="Szurek B."/>
            <person name="Verdier V."/>
            <person name="Koebnik R."/>
            <person name="Dow J.M."/>
            <person name="Ryan R.P."/>
            <person name="Hirata H."/>
            <person name="Tsuyumu S."/>
            <person name="Won Lee S."/>
            <person name="Seo Y.-S."/>
            <person name="Sriariyanum M."/>
            <person name="Ronald P.C."/>
            <person name="Sonti R.V."/>
            <person name="Van Sluys M.-A."/>
            <person name="Leach J.E."/>
            <person name="White F.F."/>
            <person name="Bogdanove A.J."/>
        </authorList>
    </citation>
    <scope>NUCLEOTIDE SEQUENCE [LARGE SCALE GENOMIC DNA]</scope>
    <source>
        <strain>PXO99A</strain>
    </source>
</reference>
<sequence>MKESILDVLLYLFEHYFSEDADLVRDRDSLQNGLIQAGFSPAEISKAFDWLDALSEQRPSVARPHVDGPVRIYHGQELDKLDVDCRGFLLFLEQHRILDADQRELVLDRAMALDQDELDLDDLKWVVLMVLFNQPGAEAAYAWMETQMFLDEPEPVH</sequence>
<evidence type="ECO:0000255" key="1">
    <source>
        <dbReference type="HAMAP-Rule" id="MF_00598"/>
    </source>
</evidence>
<gene>
    <name evidence="1" type="primary">smg</name>
    <name type="ordered locus">PXO_04052</name>
</gene>
<proteinExistence type="inferred from homology"/>
<protein>
    <recommendedName>
        <fullName evidence="1">Protein Smg homolog</fullName>
    </recommendedName>
</protein>
<organism>
    <name type="scientific">Xanthomonas oryzae pv. oryzae (strain PXO99A)</name>
    <dbReference type="NCBI Taxonomy" id="360094"/>
    <lineage>
        <taxon>Bacteria</taxon>
        <taxon>Pseudomonadati</taxon>
        <taxon>Pseudomonadota</taxon>
        <taxon>Gammaproteobacteria</taxon>
        <taxon>Lysobacterales</taxon>
        <taxon>Lysobacteraceae</taxon>
        <taxon>Xanthomonas</taxon>
    </lineage>
</organism>
<dbReference type="EMBL" id="CP000967">
    <property type="protein sequence ID" value="ACD57327.1"/>
    <property type="molecule type" value="Genomic_DNA"/>
</dbReference>
<dbReference type="RefSeq" id="WP_011257490.1">
    <property type="nucleotide sequence ID" value="NC_010717.2"/>
</dbReference>
<dbReference type="SMR" id="B2SL50"/>
<dbReference type="KEGG" id="xop:PXO_04052"/>
<dbReference type="eggNOG" id="COG2922">
    <property type="taxonomic scope" value="Bacteria"/>
</dbReference>
<dbReference type="HOGENOM" id="CLU_133242_0_0_6"/>
<dbReference type="Proteomes" id="UP000001740">
    <property type="component" value="Chromosome"/>
</dbReference>
<dbReference type="HAMAP" id="MF_00598">
    <property type="entry name" value="Smg"/>
    <property type="match status" value="1"/>
</dbReference>
<dbReference type="InterPro" id="IPR007456">
    <property type="entry name" value="Smg"/>
</dbReference>
<dbReference type="NCBIfam" id="NF002897">
    <property type="entry name" value="PRK03430.1"/>
    <property type="match status" value="1"/>
</dbReference>
<dbReference type="PANTHER" id="PTHR38692">
    <property type="entry name" value="PROTEIN SMG"/>
    <property type="match status" value="1"/>
</dbReference>
<dbReference type="PANTHER" id="PTHR38692:SF1">
    <property type="entry name" value="PROTEIN SMG"/>
    <property type="match status" value="1"/>
</dbReference>
<dbReference type="Pfam" id="PF04361">
    <property type="entry name" value="DUF494"/>
    <property type="match status" value="1"/>
</dbReference>
<feature type="chain" id="PRO_1000129912" description="Protein Smg homolog">
    <location>
        <begin position="1"/>
        <end position="157"/>
    </location>
</feature>
<name>SMG_XANOP</name>